<dbReference type="EMBL" id="X69904">
    <property type="protein sequence ID" value="CAA49529.1"/>
    <property type="molecule type" value="mRNA"/>
</dbReference>
<dbReference type="PIR" id="S34068">
    <property type="entry name" value="S31769"/>
</dbReference>
<dbReference type="RefSeq" id="NP_001009396.1">
    <property type="nucleotide sequence ID" value="NM_001009396.1"/>
</dbReference>
<dbReference type="RefSeq" id="XP_012040502.1">
    <property type="nucleotide sequence ID" value="XM_012185112.4"/>
</dbReference>
<dbReference type="PDB" id="6TT7">
    <property type="method" value="EM"/>
    <property type="resolution" value="3.50 A"/>
    <property type="chains" value="1/2/3/4/5/6/7/8=1-136"/>
</dbReference>
<dbReference type="PDB" id="6ZA9">
    <property type="method" value="EM"/>
    <property type="resolution" value="3.76 A"/>
    <property type="chains" value="1/2/3/4/5/6/7/8=1-136"/>
</dbReference>
<dbReference type="PDBsum" id="6TT7"/>
<dbReference type="PDBsum" id="6ZA9"/>
<dbReference type="EMDB" id="EMD-10573"/>
<dbReference type="EMDB" id="EMD-11127"/>
<dbReference type="SMR" id="P17605"/>
<dbReference type="STRING" id="9940.ENSOARP00000007127"/>
<dbReference type="PaxDb" id="9940-ENSOARP00000007127"/>
<dbReference type="Ensembl" id="ENSOART00260006316">
    <property type="protein sequence ID" value="ENSOARP00260003304"/>
    <property type="gene ID" value="ENSOARG00260003760"/>
</dbReference>
<dbReference type="GeneID" id="443410"/>
<dbReference type="KEGG" id="oas:443410"/>
<dbReference type="CTD" id="516"/>
<dbReference type="eggNOG" id="KOG3025">
    <property type="taxonomic scope" value="Eukaryota"/>
</dbReference>
<dbReference type="HOGENOM" id="CLU_116822_1_0_1"/>
<dbReference type="OMA" id="CMGFCIL"/>
<dbReference type="OrthoDB" id="438052at2759"/>
<dbReference type="Proteomes" id="UP000002356">
    <property type="component" value="Chromosome 11"/>
</dbReference>
<dbReference type="Bgee" id="ENSOARG00000006653">
    <property type="expression patterns" value="Expressed in heart right ventricle and 53 other cell types or tissues"/>
</dbReference>
<dbReference type="GO" id="GO:0031966">
    <property type="term" value="C:mitochondrial membrane"/>
    <property type="evidence" value="ECO:0007669"/>
    <property type="project" value="UniProtKB-SubCell"/>
</dbReference>
<dbReference type="GO" id="GO:0045259">
    <property type="term" value="C:proton-transporting ATP synthase complex"/>
    <property type="evidence" value="ECO:0000250"/>
    <property type="project" value="UniProtKB"/>
</dbReference>
<dbReference type="GO" id="GO:0033177">
    <property type="term" value="C:proton-transporting two-sector ATPase complex, proton-transporting domain"/>
    <property type="evidence" value="ECO:0007669"/>
    <property type="project" value="InterPro"/>
</dbReference>
<dbReference type="GO" id="GO:0008289">
    <property type="term" value="F:lipid binding"/>
    <property type="evidence" value="ECO:0007669"/>
    <property type="project" value="UniProtKB-KW"/>
</dbReference>
<dbReference type="GO" id="GO:0015252">
    <property type="term" value="F:proton channel activity"/>
    <property type="evidence" value="ECO:0000250"/>
    <property type="project" value="UniProtKB"/>
</dbReference>
<dbReference type="GO" id="GO:0015986">
    <property type="term" value="P:proton motive force-driven ATP synthesis"/>
    <property type="evidence" value="ECO:0000250"/>
    <property type="project" value="UniProtKB"/>
</dbReference>
<dbReference type="GO" id="GO:1902600">
    <property type="term" value="P:proton transmembrane transport"/>
    <property type="evidence" value="ECO:0000250"/>
    <property type="project" value="UniProtKB"/>
</dbReference>
<dbReference type="CDD" id="cd18182">
    <property type="entry name" value="ATP-synt_Fo_c_ATP5G3"/>
    <property type="match status" value="1"/>
</dbReference>
<dbReference type="FunFam" id="1.20.20.10:FF:000003">
    <property type="entry name" value="Atp synthase f complex subunit mitochondrial"/>
    <property type="match status" value="1"/>
</dbReference>
<dbReference type="Gene3D" id="1.20.20.10">
    <property type="entry name" value="F1F0 ATP synthase subunit C"/>
    <property type="match status" value="1"/>
</dbReference>
<dbReference type="HAMAP" id="MF_01396">
    <property type="entry name" value="ATP_synth_c_bact"/>
    <property type="match status" value="1"/>
</dbReference>
<dbReference type="InterPro" id="IPR000454">
    <property type="entry name" value="ATP_synth_F0_csu"/>
</dbReference>
<dbReference type="InterPro" id="IPR020537">
    <property type="entry name" value="ATP_synth_F0_csu_DDCD_BS"/>
</dbReference>
<dbReference type="InterPro" id="IPR038662">
    <property type="entry name" value="ATP_synth_F0_csu_sf"/>
</dbReference>
<dbReference type="InterPro" id="IPR002379">
    <property type="entry name" value="ATPase_proteolipid_c-like_dom"/>
</dbReference>
<dbReference type="InterPro" id="IPR035921">
    <property type="entry name" value="F/V-ATP_Csub_sf"/>
</dbReference>
<dbReference type="PANTHER" id="PTHR10031:SF51">
    <property type="entry name" value="ATP SYNTHASE F(0) COMPLEX SUBUNIT C1, MITOCHONDRIAL"/>
    <property type="match status" value="1"/>
</dbReference>
<dbReference type="PANTHER" id="PTHR10031">
    <property type="entry name" value="ATP SYNTHASE LIPID-BINDING PROTEIN, MITOCHONDRIAL"/>
    <property type="match status" value="1"/>
</dbReference>
<dbReference type="Pfam" id="PF00137">
    <property type="entry name" value="ATP-synt_C"/>
    <property type="match status" value="1"/>
</dbReference>
<dbReference type="PRINTS" id="PR00124">
    <property type="entry name" value="ATPASEC"/>
</dbReference>
<dbReference type="SUPFAM" id="SSF81333">
    <property type="entry name" value="F1F0 ATP synthase subunit C"/>
    <property type="match status" value="1"/>
</dbReference>
<dbReference type="PROSITE" id="PS00605">
    <property type="entry name" value="ATPASE_C"/>
    <property type="match status" value="1"/>
</dbReference>
<feature type="transit peptide" description="Mitochondrion" evidence="4 5">
    <location>
        <begin position="1"/>
        <end position="61"/>
    </location>
</feature>
<feature type="chain" id="PRO_0000002560" description="ATP synthase F(0) complex subunit C1, mitochondrial">
    <location>
        <begin position="62"/>
        <end position="136"/>
    </location>
</feature>
<feature type="transmembrane region" description="Helical" evidence="3">
    <location>
        <begin position="77"/>
        <end position="97"/>
    </location>
</feature>
<feature type="transmembrane region" description="Helical" evidence="3">
    <location>
        <begin position="112"/>
        <end position="132"/>
    </location>
</feature>
<feature type="site" description="Reversibly protonated during proton transport" evidence="1">
    <location>
        <position position="119"/>
    </location>
</feature>
<feature type="modified residue" description="N6,N6,N6-trimethyllysine" evidence="2">
    <location>
        <position position="104"/>
    </location>
</feature>
<feature type="helix" evidence="7">
    <location>
        <begin position="63"/>
        <end position="74"/>
    </location>
</feature>
<feature type="turn" evidence="7">
    <location>
        <begin position="75"/>
        <end position="78"/>
    </location>
</feature>
<feature type="helix" evidence="7">
    <location>
        <begin position="79"/>
        <end position="97"/>
    </location>
</feature>
<feature type="helix" evidence="7">
    <location>
        <begin position="101"/>
        <end position="103"/>
    </location>
</feature>
<feature type="helix" evidence="7">
    <location>
        <begin position="104"/>
        <end position="133"/>
    </location>
</feature>
<accession>P17605</accession>
<evidence type="ECO:0000250" key="1"/>
<evidence type="ECO:0000250" key="2">
    <source>
        <dbReference type="UniProtKB" id="P05496"/>
    </source>
</evidence>
<evidence type="ECO:0000255" key="3"/>
<evidence type="ECO:0000269" key="4">
    <source>
    </source>
</evidence>
<evidence type="ECO:0000269" key="5">
    <source>
    </source>
</evidence>
<evidence type="ECO:0000305" key="6"/>
<evidence type="ECO:0007829" key="7">
    <source>
        <dbReference type="PDB" id="6TT7"/>
    </source>
</evidence>
<comment type="function">
    <text evidence="2">Subunit c, of the mitochondrial membrane ATP synthase complex (F(1)F(0) ATP synthase or Complex V) that produces ATP from ADP in the presence of a proton gradient across the membrane which is generated by electron transport complexes of the respiratory chain. ATP synthase complex consist of a soluble F(1) head domain - the catalytic core - and a membrane F(1) domain - the membrane proton channel. These two domains are linked by a central stalk rotating inside the F(1) region and a stationary peripheral stalk. During catalysis, ATP synthesis in the catalytic domain of F(1) is coupled via a rotary mechanism of the central stalk subunits to proton translocation. With the subunit a (MT-ATP6), forms the proton-conducting channel in the F(0) domain, that contains two crucial half-channels (inlet and outlet) that facilitate proton movement from the mitochondrial intermembrane space (IMS) into the matrix. Protons are taken up via the inlet half-channel and released through the outlet half-channel, following a Grotthuss mechanism.</text>
</comment>
<comment type="catalytic activity">
    <reaction evidence="2">
        <text>H(+)(in) = H(+)(out)</text>
        <dbReference type="Rhea" id="RHEA:34979"/>
        <dbReference type="ChEBI" id="CHEBI:15378"/>
    </reaction>
</comment>
<comment type="subunit">
    <text evidence="2">Homooctamer; the c-ring consists of eight c subunits forming a circle, and each subunit adopts a hairpin shape. Component of the ATP synthase complex composed at least of ATP5F1A/subunit alpha, ATP5F1B/subunit beta, ATP5MC1/subunit c (homooctomer), MT-ATP6/subunit a, MT-ATP8/subunit 8, ATP5ME/subunit e, ATP5MF/subunit f, ATP5MG/subunit g, ATP5MK/subunit k, ATP5MJ/subunit j, ATP5F1C/subunit gamma, ATP5F1D/subunit delta, ATP5F1E/subunit epsilon, ATP5PF/subunit F6, ATP5PB/subunit b, ATP5PD/subunit d, ATP5PO/subunit OSCP. ATP synthase complex consists of a soluble F(1) head domain (subunits alpha(3) and beta(3)) - the catalytic core - and a membrane F(0) domain - the membrane proton channel (subunits c, a, 8, e, f, g, k and j). These two domains are linked by a central stalk (subunits gamma, delta, and epsilon) rotating inside the F1 region and a stationary peripheral stalk (subunits F6, b, d, and OSCP). Interacts with TMEM70 (homooligomer form); this interaction facilitates the oligomer formation of subunit c/ATP5MC1 (c-ring) and the c-ring membrane insertion and also protects ATP5MC1 against intramitochondrial proteolysis.</text>
</comment>
<comment type="subcellular location">
    <subcellularLocation>
        <location>Mitochondrion membrane</location>
        <topology>Multi-pass membrane protein</topology>
    </subcellularLocation>
</comment>
<comment type="PTM">
    <text evidence="2">Trimethylated by ATPSCKMT at Lys-104. Methylation is required for proper incorporation of the C subunit into the ATP synthase complex and mitochondrial respiration.</text>
</comment>
<comment type="disease">
    <text>This protein is the major protein stored in the storage bodies of animals or humans affected with ceroid lipofuscinosis (Batten disease).</text>
</comment>
<comment type="miscellaneous">
    <text>There are three genes which encode the ATP synthase proteolipid and they specify precursors with different import sequences but identical mature proteins.</text>
</comment>
<comment type="similarity">
    <text evidence="6">Belongs to the ATPase C chain family.</text>
</comment>
<proteinExistence type="evidence at protein level"/>
<sequence length="136" mass="14192">MQTTGALLISPALIRSCTRGLIRPVSASFLSRPEIPSVQPSYSSGPLQVARREFQTSVVSRDIDTAAKFIGAGAATVGVAGSGAGIGTVFGSLIIGYARNPSLKQQLFSYAILGFALSEAMGLFCLMVAFLILFAM</sequence>
<gene>
    <name evidence="2" type="primary">ATP5MC1</name>
    <name type="synonym">ATP5G1</name>
</gene>
<reference key="1">
    <citation type="journal article" date="1993" name="Biochem. J.">
        <title>Characterization of the expressed genes for subunit c of mitochondrial ATP synthase in sheep with ceroid lipofuscinosis.</title>
        <authorList>
            <person name="Medd S.M."/>
            <person name="Walker J.E."/>
            <person name="Jolly R.D."/>
        </authorList>
    </citation>
    <scope>NUCLEOTIDE SEQUENCE [MRNA]</scope>
</reference>
<reference key="2">
    <citation type="journal article" date="1990" name="Biochem. J.">
        <title>The sequence of the major protein stored in ovine ceroid lipofuscinosis is identical with that of the dicyclohexylcarbodiimide-reactive proteolipid of mitochondrial ATP synthase.</title>
        <authorList>
            <person name="Fearnley I.M."/>
            <person name="Walker J.E."/>
            <person name="Martinus R.D."/>
            <person name="Jolly R.D."/>
            <person name="Kirkland K.B."/>
            <person name="Shaw G.J."/>
            <person name="Palmer D.N."/>
        </authorList>
    </citation>
    <scope>PROTEIN SEQUENCE OF 62-136</scope>
</reference>
<reference key="3">
    <citation type="journal article" date="1989" name="J. Biol. Chem.">
        <title>Ovine ceroid lipofuscinosis. The major lipopigment protein and the lipid-binding subunit of mitochondrial ATP synthase have the same NH2-terminal sequence.</title>
        <authorList>
            <person name="Palmer D.N."/>
            <person name="Martinus R.D."/>
            <person name="Cooper S.M."/>
            <person name="Midwinter G.G."/>
            <person name="Reid J.C."/>
            <person name="Jolly R.D."/>
        </authorList>
    </citation>
    <scope>PROTEIN SEQUENCE OF 62-101</scope>
</reference>
<protein>
    <recommendedName>
        <fullName evidence="2">ATP synthase F(0) complex subunit C1, mitochondrial</fullName>
    </recommendedName>
    <alternativeName>
        <fullName>ATP synthase lipid-binding protein</fullName>
    </alternativeName>
    <alternativeName>
        <fullName evidence="2">ATP synthase membrane subunit c locus 1</fullName>
    </alternativeName>
    <alternativeName>
        <fullName>ATP synthase proteolipid P1</fullName>
    </alternativeName>
    <alternativeName>
        <fullName>ATPase protein 9</fullName>
    </alternativeName>
    <alternativeName>
        <fullName>ATPase subunit c</fullName>
    </alternativeName>
    <alternativeName>
        <fullName evidence="2">Proton-conducting channel, ATP synthase F(0) complex subunit c</fullName>
    </alternativeName>
</protein>
<name>AT5G1_SHEEP</name>
<keyword id="KW-0002">3D-structure</keyword>
<keyword id="KW-0138">CF(0)</keyword>
<keyword id="KW-0903">Direct protein sequencing</keyword>
<keyword id="KW-0375">Hydrogen ion transport</keyword>
<keyword id="KW-0406">Ion transport</keyword>
<keyword id="KW-0446">Lipid-binding</keyword>
<keyword id="KW-0472">Membrane</keyword>
<keyword id="KW-0488">Methylation</keyword>
<keyword id="KW-0496">Mitochondrion</keyword>
<keyword id="KW-1185">Reference proteome</keyword>
<keyword id="KW-0809">Transit peptide</keyword>
<keyword id="KW-0812">Transmembrane</keyword>
<keyword id="KW-1133">Transmembrane helix</keyword>
<keyword id="KW-0813">Transport</keyword>
<organism>
    <name type="scientific">Ovis aries</name>
    <name type="common">Sheep</name>
    <dbReference type="NCBI Taxonomy" id="9940"/>
    <lineage>
        <taxon>Eukaryota</taxon>
        <taxon>Metazoa</taxon>
        <taxon>Chordata</taxon>
        <taxon>Craniata</taxon>
        <taxon>Vertebrata</taxon>
        <taxon>Euteleostomi</taxon>
        <taxon>Mammalia</taxon>
        <taxon>Eutheria</taxon>
        <taxon>Laurasiatheria</taxon>
        <taxon>Artiodactyla</taxon>
        <taxon>Ruminantia</taxon>
        <taxon>Pecora</taxon>
        <taxon>Bovidae</taxon>
        <taxon>Caprinae</taxon>
        <taxon>Ovis</taxon>
    </lineage>
</organism>